<name>EMBB_MYCAV</name>
<comment type="function">
    <text>Arabinosyl transferase responsible for the polymerization of arabinose into the arabinan of arabinogalactan.</text>
</comment>
<comment type="subcellular location">
    <subcellularLocation>
        <location evidence="2">Cell membrane</location>
        <topology evidence="2">Multi-pass membrane protein</topology>
    </subcellularLocation>
</comment>
<comment type="similarity">
    <text evidence="2">Belongs to the emb family.</text>
</comment>
<dbReference type="EC" id="2.4.2.-"/>
<dbReference type="EMBL" id="U66560">
    <property type="protein sequence ID" value="AAC44548.1"/>
    <property type="molecule type" value="Genomic_DNA"/>
</dbReference>
<dbReference type="SMR" id="P71486"/>
<dbReference type="CAZy" id="GT53">
    <property type="family name" value="Glycosyltransferase Family 53"/>
</dbReference>
<dbReference type="GO" id="GO:0005886">
    <property type="term" value="C:plasma membrane"/>
    <property type="evidence" value="ECO:0007669"/>
    <property type="project" value="UniProtKB-SubCell"/>
</dbReference>
<dbReference type="GO" id="GO:0052636">
    <property type="term" value="F:arabinosyltransferase activity"/>
    <property type="evidence" value="ECO:0007669"/>
    <property type="project" value="InterPro"/>
</dbReference>
<dbReference type="GO" id="GO:0071766">
    <property type="term" value="P:Actinobacterium-type cell wall biogenesis"/>
    <property type="evidence" value="ECO:0007669"/>
    <property type="project" value="InterPro"/>
</dbReference>
<dbReference type="GO" id="GO:0071555">
    <property type="term" value="P:cell wall organization"/>
    <property type="evidence" value="ECO:0007669"/>
    <property type="project" value="UniProtKB-KW"/>
</dbReference>
<dbReference type="GO" id="GO:0046677">
    <property type="term" value="P:response to antibiotic"/>
    <property type="evidence" value="ECO:0007669"/>
    <property type="project" value="UniProtKB-KW"/>
</dbReference>
<dbReference type="FunFam" id="2.60.120.940:FF:000001">
    <property type="entry name" value="Membrane indolylacetylinositol arabinosyltransferase embC"/>
    <property type="match status" value="1"/>
</dbReference>
<dbReference type="Gene3D" id="3.40.190.160">
    <property type="match status" value="1"/>
</dbReference>
<dbReference type="Gene3D" id="2.60.120.610">
    <property type="entry name" value="arabinofuranosyltransferase like domain"/>
    <property type="match status" value="1"/>
</dbReference>
<dbReference type="Gene3D" id="2.60.120.940">
    <property type="entry name" value="EmbC, C-terminal domain, subdomain 2"/>
    <property type="match status" value="1"/>
</dbReference>
<dbReference type="InterPro" id="IPR032731">
    <property type="entry name" value="Arabino_trans_C"/>
</dbReference>
<dbReference type="InterPro" id="IPR042486">
    <property type="entry name" value="Arabino_trans_C_2"/>
</dbReference>
<dbReference type="InterPro" id="IPR007680">
    <property type="entry name" value="Arabino_trans_central"/>
</dbReference>
<dbReference type="InterPro" id="IPR040920">
    <property type="entry name" value="Arabino_trans_N"/>
</dbReference>
<dbReference type="InterPro" id="IPR027451">
    <property type="entry name" value="EmbABC_dom1"/>
</dbReference>
<dbReference type="Pfam" id="PF14896">
    <property type="entry name" value="Arabino_trans_C"/>
    <property type="match status" value="1"/>
</dbReference>
<dbReference type="Pfam" id="PF17689">
    <property type="entry name" value="Arabino_trans_N"/>
    <property type="match status" value="1"/>
</dbReference>
<dbReference type="Pfam" id="PF04602">
    <property type="entry name" value="Arabinose_trans"/>
    <property type="match status" value="1"/>
</dbReference>
<feature type="chain" id="PRO_0000220565" description="Probable arabinosyltransferase B">
    <location>
        <begin position="1"/>
        <end position="1065"/>
    </location>
</feature>
<feature type="transmembrane region" description="Helical" evidence="1">
    <location>
        <begin position="15"/>
        <end position="37"/>
    </location>
</feature>
<feature type="transmembrane region" description="Helical" evidence="1">
    <location>
        <begin position="204"/>
        <end position="226"/>
    </location>
</feature>
<feature type="transmembrane region" description="Helical" evidence="1">
    <location>
        <begin position="241"/>
        <end position="263"/>
    </location>
</feature>
<feature type="transmembrane region" description="Helical" evidence="1">
    <location>
        <begin position="394"/>
        <end position="413"/>
    </location>
</feature>
<feature type="transmembrane region" description="Helical" evidence="1">
    <location>
        <begin position="417"/>
        <end position="436"/>
    </location>
</feature>
<feature type="transmembrane region" description="Helical" evidence="1">
    <location>
        <begin position="441"/>
        <end position="463"/>
    </location>
</feature>
<feature type="transmembrane region" description="Helical" evidence="1">
    <location>
        <begin position="510"/>
        <end position="527"/>
    </location>
</feature>
<feature type="transmembrane region" description="Helical" evidence="1">
    <location>
        <begin position="540"/>
        <end position="557"/>
    </location>
</feature>
<feature type="transmembrane region" description="Helical" evidence="1">
    <location>
        <begin position="567"/>
        <end position="589"/>
    </location>
</feature>
<feature type="transmembrane region" description="Helical" evidence="1">
    <location>
        <begin position="596"/>
        <end position="618"/>
    </location>
</feature>
<feature type="transmembrane region" description="Helical" evidence="1">
    <location>
        <begin position="633"/>
        <end position="655"/>
    </location>
</feature>
<feature type="transmembrane region" description="Helical" evidence="1">
    <location>
        <begin position="667"/>
        <end position="689"/>
    </location>
</feature>
<reference key="1">
    <citation type="journal article" date="1996" name="Proc. Natl. Acad. Sci. U.S.A.">
        <title>The embAB genes of Mycobacterium avium encode an arabinosyl transferase involved in cell wall arabinan biosynthesis that is the target for the antimycobacterial drug ethambutol.</title>
        <authorList>
            <person name="Belanger A.E."/>
            <person name="Besra G.S."/>
            <person name="Ford M.E."/>
            <person name="Mikusova K."/>
            <person name="Belisle J.T."/>
            <person name="Brennan P.J."/>
            <person name="Inamine J.M."/>
        </authorList>
    </citation>
    <scope>NUCLEOTIDE SEQUENCE [GENOMIC DNA]</scope>
    <source>
        <strain>2151</strain>
    </source>
</reference>
<sequence length="1065" mass="114625">MSVSTVGGDVRVTRWVATIAGLIGFVLSVATPLLPVVQTTATLNWPQGGQLNSVTAPLISLTPVDLTATVPCSLVRDLPPGGGVILSTGPKKGKDAALNALFVVAHGKRVDVTDRNVVIASASRDQVAGAGCSRIEIASTRAGTFATFVGLTDPAGKPLGGGFPDPNLRPQIVGVFTDLTGPAPAGLKLSATIDTRFSTTPTTLKLAAMVTAILATIVALVALWRLDQLDGHRMRRLIPANWRTFTLADVAVIFGFVLWHVIGANSSDDGYILGMARVADRAGYMSNYFRWFGSPEDPFGWYYNLLALMTHVSDASLWMRLPDLFAGIVCWLLLSREVLPRLGPAVAASRPANWAAGMVLLTAWMPFDNGLRPEPIIALGSLVTYVLIERSMRYSRLTPAALAVITAAFTLGVQPTGLIAVAALVAGGRPILRILVRRHRVVGTWPLVAPMLAAGTVILTVVFADQTLATVLEATRIRTAIGPSQAWYTENLRYYYLILPTVDGSLSRRFGFLITALCLFTAVFIMLRRKRIPGVARGPAWRLMGVIFGTMFFLMFTPTKWVHHFGLFAAVGAAMAALTTVLVSPAVLGWSRNRMAFLAALLFMMALCFATTNGWWYVSSYGVPFNSTMPKIGGITVSTVFFSMFVAAALYAIWLHFASREHGEGRLARALTAAPVPLAAGFMALVFIASMVAGIVRQYPTYSNAWDNLREFSGGCGLADDVLVEPDSNVGYMTPLGGDYGPLGPLGGQHPVGFSPNGVPEHTVAEAIRITPNQPGTDYDWDAPTKLSAPGINGSTVPLPYGLDAARVPLAGSYTTGAQQQSRLTSAWYRLPAPDDGHPLVVVTAAGKIAGNSVLHHHTDGQTVVLEYGRPGPGGDIVPAGRLVPYDLYGEQPKAWRNLRFARSDMPADTVAVRVVAEDLSLTPEDWIAVTPPRVPEMRSLQEYVGSTQPVLMDWAVGLAFPCQQPMLHVNGVTEIPKFRITPDYTAKKMDTDTWEDGTNGGLLGITDLLLRAHVMSTYLSHDWGRDWGSLRRFETIADAHPAQLDLGTATRTGWWSPGPIRIKP</sequence>
<protein>
    <recommendedName>
        <fullName>Probable arabinosyltransferase B</fullName>
        <ecNumber>2.4.2.-</ecNumber>
    </recommendedName>
</protein>
<organism>
    <name type="scientific">Mycobacterium avium</name>
    <dbReference type="NCBI Taxonomy" id="1764"/>
    <lineage>
        <taxon>Bacteria</taxon>
        <taxon>Bacillati</taxon>
        <taxon>Actinomycetota</taxon>
        <taxon>Actinomycetes</taxon>
        <taxon>Mycobacteriales</taxon>
        <taxon>Mycobacteriaceae</taxon>
        <taxon>Mycobacterium</taxon>
        <taxon>Mycobacterium avium complex (MAC)</taxon>
    </lineage>
</organism>
<gene>
    <name type="primary">embB</name>
</gene>
<keyword id="KW-0046">Antibiotic resistance</keyword>
<keyword id="KW-1003">Cell membrane</keyword>
<keyword id="KW-0961">Cell wall biogenesis/degradation</keyword>
<keyword id="KW-0328">Glycosyltransferase</keyword>
<keyword id="KW-0472">Membrane</keyword>
<keyword id="KW-0808">Transferase</keyword>
<keyword id="KW-0812">Transmembrane</keyword>
<keyword id="KW-1133">Transmembrane helix</keyword>
<accession>P71486</accession>
<proteinExistence type="inferred from homology"/>
<evidence type="ECO:0000255" key="1"/>
<evidence type="ECO:0000305" key="2"/>